<gene>
    <name evidence="1" type="primary">rpsH</name>
    <name type="ordered locus">Cphy_3653</name>
</gene>
<organism>
    <name type="scientific">Lachnoclostridium phytofermentans (strain ATCC 700394 / DSM 18823 / ISDg)</name>
    <name type="common">Clostridium phytofermentans</name>
    <dbReference type="NCBI Taxonomy" id="357809"/>
    <lineage>
        <taxon>Bacteria</taxon>
        <taxon>Bacillati</taxon>
        <taxon>Bacillota</taxon>
        <taxon>Clostridia</taxon>
        <taxon>Lachnospirales</taxon>
        <taxon>Lachnospiraceae</taxon>
    </lineage>
</organism>
<comment type="function">
    <text evidence="1">One of the primary rRNA binding proteins, it binds directly to 16S rRNA central domain where it helps coordinate assembly of the platform of the 30S subunit.</text>
</comment>
<comment type="subunit">
    <text evidence="1">Part of the 30S ribosomal subunit. Contacts proteins S5 and S12.</text>
</comment>
<comment type="similarity">
    <text evidence="1">Belongs to the universal ribosomal protein uS8 family.</text>
</comment>
<keyword id="KW-1185">Reference proteome</keyword>
<keyword id="KW-0687">Ribonucleoprotein</keyword>
<keyword id="KW-0689">Ribosomal protein</keyword>
<keyword id="KW-0694">RNA-binding</keyword>
<keyword id="KW-0699">rRNA-binding</keyword>
<dbReference type="EMBL" id="CP000885">
    <property type="protein sequence ID" value="ABX44000.1"/>
    <property type="molecule type" value="Genomic_DNA"/>
</dbReference>
<dbReference type="RefSeq" id="WP_012201648.1">
    <property type="nucleotide sequence ID" value="NC_010001.1"/>
</dbReference>
<dbReference type="SMR" id="A9KJI0"/>
<dbReference type="STRING" id="357809.Cphy_3653"/>
<dbReference type="KEGG" id="cpy:Cphy_3653"/>
<dbReference type="eggNOG" id="COG0096">
    <property type="taxonomic scope" value="Bacteria"/>
</dbReference>
<dbReference type="HOGENOM" id="CLU_098428_0_2_9"/>
<dbReference type="OrthoDB" id="9802617at2"/>
<dbReference type="Proteomes" id="UP000000370">
    <property type="component" value="Chromosome"/>
</dbReference>
<dbReference type="GO" id="GO:1990904">
    <property type="term" value="C:ribonucleoprotein complex"/>
    <property type="evidence" value="ECO:0007669"/>
    <property type="project" value="UniProtKB-KW"/>
</dbReference>
<dbReference type="GO" id="GO:0005840">
    <property type="term" value="C:ribosome"/>
    <property type="evidence" value="ECO:0007669"/>
    <property type="project" value="UniProtKB-KW"/>
</dbReference>
<dbReference type="GO" id="GO:0019843">
    <property type="term" value="F:rRNA binding"/>
    <property type="evidence" value="ECO:0007669"/>
    <property type="project" value="UniProtKB-UniRule"/>
</dbReference>
<dbReference type="GO" id="GO:0003735">
    <property type="term" value="F:structural constituent of ribosome"/>
    <property type="evidence" value="ECO:0007669"/>
    <property type="project" value="InterPro"/>
</dbReference>
<dbReference type="GO" id="GO:0006412">
    <property type="term" value="P:translation"/>
    <property type="evidence" value="ECO:0007669"/>
    <property type="project" value="UniProtKB-UniRule"/>
</dbReference>
<dbReference type="FunFam" id="3.30.1370.30:FF:000002">
    <property type="entry name" value="30S ribosomal protein S8"/>
    <property type="match status" value="1"/>
</dbReference>
<dbReference type="FunFam" id="3.30.1490.10:FF:000001">
    <property type="entry name" value="30S ribosomal protein S8"/>
    <property type="match status" value="1"/>
</dbReference>
<dbReference type="Gene3D" id="3.30.1370.30">
    <property type="match status" value="1"/>
</dbReference>
<dbReference type="Gene3D" id="3.30.1490.10">
    <property type="match status" value="1"/>
</dbReference>
<dbReference type="HAMAP" id="MF_01302_B">
    <property type="entry name" value="Ribosomal_uS8_B"/>
    <property type="match status" value="1"/>
</dbReference>
<dbReference type="InterPro" id="IPR000630">
    <property type="entry name" value="Ribosomal_uS8"/>
</dbReference>
<dbReference type="InterPro" id="IPR047863">
    <property type="entry name" value="Ribosomal_uS8_CS"/>
</dbReference>
<dbReference type="InterPro" id="IPR035987">
    <property type="entry name" value="Ribosomal_uS8_sf"/>
</dbReference>
<dbReference type="NCBIfam" id="NF001109">
    <property type="entry name" value="PRK00136.1"/>
    <property type="match status" value="1"/>
</dbReference>
<dbReference type="PANTHER" id="PTHR11758">
    <property type="entry name" value="40S RIBOSOMAL PROTEIN S15A"/>
    <property type="match status" value="1"/>
</dbReference>
<dbReference type="Pfam" id="PF00410">
    <property type="entry name" value="Ribosomal_S8"/>
    <property type="match status" value="1"/>
</dbReference>
<dbReference type="SUPFAM" id="SSF56047">
    <property type="entry name" value="Ribosomal protein S8"/>
    <property type="match status" value="1"/>
</dbReference>
<dbReference type="PROSITE" id="PS00053">
    <property type="entry name" value="RIBOSOMAL_S8"/>
    <property type="match status" value="1"/>
</dbReference>
<feature type="chain" id="PRO_1000085917" description="Small ribosomal subunit protein uS8">
    <location>
        <begin position="1"/>
        <end position="133"/>
    </location>
</feature>
<sequence>MTMSDPIADMLTRIRNANTAKHDTVDVPASKMKIAIAEILLKEGYIKSFEIEEVGSFKTIHITLKYGKDKNEKVITGLKRISKPGLRVYANSTELPRVLGGLGVAIISTNKGVLTDKAARNANVGGEVLAFIW</sequence>
<proteinExistence type="inferred from homology"/>
<name>RS8_LACP7</name>
<reference key="1">
    <citation type="submission" date="2007-11" db="EMBL/GenBank/DDBJ databases">
        <title>Complete genome sequence of Clostridium phytofermentans ISDg.</title>
        <authorList>
            <person name="Leschine S.B."/>
            <person name="Warnick T.A."/>
            <person name="Blanchard J.L."/>
            <person name="Schnell D.J."/>
            <person name="Petit E.L."/>
            <person name="LaTouf W.G."/>
            <person name="Copeland A."/>
            <person name="Lucas S."/>
            <person name="Lapidus A."/>
            <person name="Barry K."/>
            <person name="Glavina del Rio T."/>
            <person name="Dalin E."/>
            <person name="Tice H."/>
            <person name="Pitluck S."/>
            <person name="Kiss H."/>
            <person name="Brettin T."/>
            <person name="Bruce D."/>
            <person name="Detter J.C."/>
            <person name="Han C."/>
            <person name="Kuske C."/>
            <person name="Schmutz J."/>
            <person name="Larimer F."/>
            <person name="Land M."/>
            <person name="Hauser L."/>
            <person name="Kyrpides N."/>
            <person name="Kim E.A."/>
            <person name="Richardson P."/>
        </authorList>
    </citation>
    <scope>NUCLEOTIDE SEQUENCE [LARGE SCALE GENOMIC DNA]</scope>
    <source>
        <strain>ATCC 700394 / DSM 18823 / ISDg</strain>
    </source>
</reference>
<evidence type="ECO:0000255" key="1">
    <source>
        <dbReference type="HAMAP-Rule" id="MF_01302"/>
    </source>
</evidence>
<evidence type="ECO:0000305" key="2"/>
<protein>
    <recommendedName>
        <fullName evidence="1">Small ribosomal subunit protein uS8</fullName>
    </recommendedName>
    <alternativeName>
        <fullName evidence="2">30S ribosomal protein S8</fullName>
    </alternativeName>
</protein>
<accession>A9KJI0</accession>